<proteinExistence type="inferred from homology"/>
<sequence length="345" mass="37774">MKFIDEAIIKVQAGAGGHGCLSFRREKFIPFGGPDGGDGGNGGSIYLIADKNINTLVDFRHQHHFRARRGENGRGRLQTGKSSEDIYIPVPLGTEAWEAETGELLGDLTRPGQTLLVAKGGAHGLGNARFKSSTNRAPRKTTQGKPGEERTLRLELKLLADVGLLGLPNAGKSTFIRQVSAATPKVADYPFTTLHPHLGVVRIDSNRSFVAADIPGLIEGAAQGAGLGVRFLKHLSRTRLLLHFVDVAPLEPTLSPVDSVRAIHRELQQFSPELAAQEQWLVFNKTDLISSSERASRCQEIIREICWQKPVYEISALTGEGCQRLIHAVMQYLEEVSPYEKEDSQ</sequence>
<feature type="chain" id="PRO_0000386091" description="GTPase Obg">
    <location>
        <begin position="1"/>
        <end position="345"/>
    </location>
</feature>
<feature type="domain" description="Obg" evidence="2">
    <location>
        <begin position="1"/>
        <end position="159"/>
    </location>
</feature>
<feature type="domain" description="OBG-type G" evidence="1">
    <location>
        <begin position="160"/>
        <end position="334"/>
    </location>
</feature>
<feature type="region of interest" description="Disordered" evidence="3">
    <location>
        <begin position="127"/>
        <end position="148"/>
    </location>
</feature>
<feature type="compositionally biased region" description="Polar residues" evidence="3">
    <location>
        <begin position="130"/>
        <end position="144"/>
    </location>
</feature>
<feature type="binding site" evidence="1">
    <location>
        <begin position="166"/>
        <end position="173"/>
    </location>
    <ligand>
        <name>GTP</name>
        <dbReference type="ChEBI" id="CHEBI:37565"/>
    </ligand>
</feature>
<feature type="binding site" evidence="1">
    <location>
        <position position="173"/>
    </location>
    <ligand>
        <name>Mg(2+)</name>
        <dbReference type="ChEBI" id="CHEBI:18420"/>
    </ligand>
</feature>
<feature type="binding site" evidence="1">
    <location>
        <begin position="191"/>
        <end position="195"/>
    </location>
    <ligand>
        <name>GTP</name>
        <dbReference type="ChEBI" id="CHEBI:37565"/>
    </ligand>
</feature>
<feature type="binding site" evidence="1">
    <location>
        <position position="193"/>
    </location>
    <ligand>
        <name>Mg(2+)</name>
        <dbReference type="ChEBI" id="CHEBI:18420"/>
    </ligand>
</feature>
<feature type="binding site" evidence="1">
    <location>
        <begin position="213"/>
        <end position="216"/>
    </location>
    <ligand>
        <name>GTP</name>
        <dbReference type="ChEBI" id="CHEBI:37565"/>
    </ligand>
</feature>
<feature type="binding site" evidence="1">
    <location>
        <begin position="284"/>
        <end position="287"/>
    </location>
    <ligand>
        <name>GTP</name>
        <dbReference type="ChEBI" id="CHEBI:37565"/>
    </ligand>
</feature>
<feature type="binding site" evidence="1">
    <location>
        <begin position="315"/>
        <end position="317"/>
    </location>
    <ligand>
        <name>GTP</name>
        <dbReference type="ChEBI" id="CHEBI:37565"/>
    </ligand>
</feature>
<comment type="function">
    <text evidence="1">An essential GTPase which binds GTP, GDP and possibly (p)ppGpp with moderate affinity, with high nucleotide exchange rates and a fairly low GTP hydrolysis rate. Plays a role in control of the cell cycle, stress response, ribosome biogenesis and in those bacteria that undergo differentiation, in morphogenesis control.</text>
</comment>
<comment type="cofactor">
    <cofactor evidence="1">
        <name>Mg(2+)</name>
        <dbReference type="ChEBI" id="CHEBI:18420"/>
    </cofactor>
</comment>
<comment type="subunit">
    <text evidence="1">Monomer.</text>
</comment>
<comment type="subcellular location">
    <subcellularLocation>
        <location evidence="1">Cytoplasm</location>
    </subcellularLocation>
</comment>
<comment type="similarity">
    <text evidence="1">Belongs to the TRAFAC class OBG-HflX-like GTPase superfamily. OBG GTPase family.</text>
</comment>
<accession>Q3J6S0</accession>
<gene>
    <name evidence="1" type="primary">obg</name>
    <name type="ordered locus">Noc_3035</name>
</gene>
<protein>
    <recommendedName>
        <fullName evidence="1">GTPase Obg</fullName>
        <ecNumber evidence="1">3.6.5.-</ecNumber>
    </recommendedName>
    <alternativeName>
        <fullName evidence="1">GTP-binding protein Obg</fullName>
    </alternativeName>
</protein>
<organism>
    <name type="scientific">Nitrosococcus oceani (strain ATCC 19707 / BCRC 17464 / JCM 30415 / NCIMB 11848 / C-107)</name>
    <dbReference type="NCBI Taxonomy" id="323261"/>
    <lineage>
        <taxon>Bacteria</taxon>
        <taxon>Pseudomonadati</taxon>
        <taxon>Pseudomonadota</taxon>
        <taxon>Gammaproteobacteria</taxon>
        <taxon>Chromatiales</taxon>
        <taxon>Chromatiaceae</taxon>
        <taxon>Nitrosococcus</taxon>
    </lineage>
</organism>
<evidence type="ECO:0000255" key="1">
    <source>
        <dbReference type="HAMAP-Rule" id="MF_01454"/>
    </source>
</evidence>
<evidence type="ECO:0000255" key="2">
    <source>
        <dbReference type="PROSITE-ProRule" id="PRU01231"/>
    </source>
</evidence>
<evidence type="ECO:0000256" key="3">
    <source>
        <dbReference type="SAM" id="MobiDB-lite"/>
    </source>
</evidence>
<dbReference type="EC" id="3.6.5.-" evidence="1"/>
<dbReference type="EMBL" id="CP000127">
    <property type="protein sequence ID" value="ABA59476.1"/>
    <property type="molecule type" value="Genomic_DNA"/>
</dbReference>
<dbReference type="SMR" id="Q3J6S0"/>
<dbReference type="FunCoup" id="Q3J6S0">
    <property type="interactions" value="543"/>
</dbReference>
<dbReference type="STRING" id="323261.Noc_3035"/>
<dbReference type="KEGG" id="noc:Noc_3035"/>
<dbReference type="eggNOG" id="COG0536">
    <property type="taxonomic scope" value="Bacteria"/>
</dbReference>
<dbReference type="HOGENOM" id="CLU_011747_2_0_6"/>
<dbReference type="InParanoid" id="Q3J6S0"/>
<dbReference type="Proteomes" id="UP000006838">
    <property type="component" value="Chromosome"/>
</dbReference>
<dbReference type="GO" id="GO:0005737">
    <property type="term" value="C:cytoplasm"/>
    <property type="evidence" value="ECO:0007669"/>
    <property type="project" value="UniProtKB-SubCell"/>
</dbReference>
<dbReference type="GO" id="GO:0005525">
    <property type="term" value="F:GTP binding"/>
    <property type="evidence" value="ECO:0007669"/>
    <property type="project" value="UniProtKB-UniRule"/>
</dbReference>
<dbReference type="GO" id="GO:0003924">
    <property type="term" value="F:GTPase activity"/>
    <property type="evidence" value="ECO:0007669"/>
    <property type="project" value="UniProtKB-UniRule"/>
</dbReference>
<dbReference type="GO" id="GO:0000287">
    <property type="term" value="F:magnesium ion binding"/>
    <property type="evidence" value="ECO:0007669"/>
    <property type="project" value="InterPro"/>
</dbReference>
<dbReference type="GO" id="GO:0042254">
    <property type="term" value="P:ribosome biogenesis"/>
    <property type="evidence" value="ECO:0007669"/>
    <property type="project" value="UniProtKB-UniRule"/>
</dbReference>
<dbReference type="CDD" id="cd01898">
    <property type="entry name" value="Obg"/>
    <property type="match status" value="1"/>
</dbReference>
<dbReference type="FunFam" id="2.70.210.12:FF:000001">
    <property type="entry name" value="GTPase Obg"/>
    <property type="match status" value="1"/>
</dbReference>
<dbReference type="Gene3D" id="2.70.210.12">
    <property type="entry name" value="GTP1/OBG domain"/>
    <property type="match status" value="1"/>
</dbReference>
<dbReference type="Gene3D" id="3.40.50.300">
    <property type="entry name" value="P-loop containing nucleotide triphosphate hydrolases"/>
    <property type="match status" value="1"/>
</dbReference>
<dbReference type="HAMAP" id="MF_01454">
    <property type="entry name" value="GTPase_Obg"/>
    <property type="match status" value="1"/>
</dbReference>
<dbReference type="InterPro" id="IPR031167">
    <property type="entry name" value="G_OBG"/>
</dbReference>
<dbReference type="InterPro" id="IPR006073">
    <property type="entry name" value="GTP-bd"/>
</dbReference>
<dbReference type="InterPro" id="IPR014100">
    <property type="entry name" value="GTP-bd_Obg/CgtA"/>
</dbReference>
<dbReference type="InterPro" id="IPR006074">
    <property type="entry name" value="GTP1-OBG_CS"/>
</dbReference>
<dbReference type="InterPro" id="IPR006169">
    <property type="entry name" value="GTP1_OBG_dom"/>
</dbReference>
<dbReference type="InterPro" id="IPR036726">
    <property type="entry name" value="GTP1_OBG_dom_sf"/>
</dbReference>
<dbReference type="InterPro" id="IPR045086">
    <property type="entry name" value="OBG_GTPase"/>
</dbReference>
<dbReference type="InterPro" id="IPR027417">
    <property type="entry name" value="P-loop_NTPase"/>
</dbReference>
<dbReference type="NCBIfam" id="TIGR02729">
    <property type="entry name" value="Obg_CgtA"/>
    <property type="match status" value="1"/>
</dbReference>
<dbReference type="NCBIfam" id="NF008955">
    <property type="entry name" value="PRK12297.1"/>
    <property type="match status" value="1"/>
</dbReference>
<dbReference type="NCBIfam" id="NF008956">
    <property type="entry name" value="PRK12299.1"/>
    <property type="match status" value="1"/>
</dbReference>
<dbReference type="PANTHER" id="PTHR11702">
    <property type="entry name" value="DEVELOPMENTALLY REGULATED GTP-BINDING PROTEIN-RELATED"/>
    <property type="match status" value="1"/>
</dbReference>
<dbReference type="PANTHER" id="PTHR11702:SF31">
    <property type="entry name" value="MITOCHONDRIAL RIBOSOME-ASSOCIATED GTPASE 2"/>
    <property type="match status" value="1"/>
</dbReference>
<dbReference type="Pfam" id="PF01018">
    <property type="entry name" value="GTP1_OBG"/>
    <property type="match status" value="1"/>
</dbReference>
<dbReference type="Pfam" id="PF01926">
    <property type="entry name" value="MMR_HSR1"/>
    <property type="match status" value="1"/>
</dbReference>
<dbReference type="PIRSF" id="PIRSF002401">
    <property type="entry name" value="GTP_bd_Obg/CgtA"/>
    <property type="match status" value="1"/>
</dbReference>
<dbReference type="PRINTS" id="PR00326">
    <property type="entry name" value="GTP1OBG"/>
</dbReference>
<dbReference type="SUPFAM" id="SSF82051">
    <property type="entry name" value="Obg GTP-binding protein N-terminal domain"/>
    <property type="match status" value="1"/>
</dbReference>
<dbReference type="SUPFAM" id="SSF52540">
    <property type="entry name" value="P-loop containing nucleoside triphosphate hydrolases"/>
    <property type="match status" value="1"/>
</dbReference>
<dbReference type="PROSITE" id="PS51710">
    <property type="entry name" value="G_OBG"/>
    <property type="match status" value="1"/>
</dbReference>
<dbReference type="PROSITE" id="PS00905">
    <property type="entry name" value="GTP1_OBG"/>
    <property type="match status" value="1"/>
</dbReference>
<dbReference type="PROSITE" id="PS51883">
    <property type="entry name" value="OBG"/>
    <property type="match status" value="1"/>
</dbReference>
<name>OBG_NITOC</name>
<reference key="1">
    <citation type="journal article" date="2006" name="Appl. Environ. Microbiol.">
        <title>Complete genome sequence of the marine, chemolithoautotrophic, ammonia-oxidizing bacterium Nitrosococcus oceani ATCC 19707.</title>
        <authorList>
            <person name="Klotz M.G."/>
            <person name="Arp D.J."/>
            <person name="Chain P.S.G."/>
            <person name="El-Sheikh A.F."/>
            <person name="Hauser L.J."/>
            <person name="Hommes N.G."/>
            <person name="Larimer F.W."/>
            <person name="Malfatti S.A."/>
            <person name="Norton J.M."/>
            <person name="Poret-Peterson A.T."/>
            <person name="Vergez L.M."/>
            <person name="Ward B.B."/>
        </authorList>
    </citation>
    <scope>NUCLEOTIDE SEQUENCE [LARGE SCALE GENOMIC DNA]</scope>
    <source>
        <strain>ATCC 19707 / BCRC 17464 / JCM 30415 / NCIMB 11848 / C-107</strain>
    </source>
</reference>
<keyword id="KW-0963">Cytoplasm</keyword>
<keyword id="KW-0342">GTP-binding</keyword>
<keyword id="KW-0378">Hydrolase</keyword>
<keyword id="KW-0460">Magnesium</keyword>
<keyword id="KW-0479">Metal-binding</keyword>
<keyword id="KW-0547">Nucleotide-binding</keyword>
<keyword id="KW-1185">Reference proteome</keyword>